<organism>
    <name type="scientific">Chlamydia abortus (strain DSM 27085 / S26/3)</name>
    <name type="common">Chlamydophila abortus</name>
    <dbReference type="NCBI Taxonomy" id="218497"/>
    <lineage>
        <taxon>Bacteria</taxon>
        <taxon>Pseudomonadati</taxon>
        <taxon>Chlamydiota</taxon>
        <taxon>Chlamydiia</taxon>
        <taxon>Chlamydiales</taxon>
        <taxon>Chlamydiaceae</taxon>
        <taxon>Chlamydia/Chlamydophila group</taxon>
        <taxon>Chlamydia</taxon>
    </lineage>
</organism>
<proteinExistence type="inferred from homology"/>
<name>DAPB_CHLAB</name>
<reference key="1">
    <citation type="journal article" date="2005" name="Genome Res.">
        <title>The Chlamydophila abortus genome sequence reveals an array of variable proteins that contribute to interspecies variation.</title>
        <authorList>
            <person name="Thomson N.R."/>
            <person name="Yeats C."/>
            <person name="Bell K."/>
            <person name="Holden M.T.G."/>
            <person name="Bentley S.D."/>
            <person name="Livingstone M."/>
            <person name="Cerdeno-Tarraga A.-M."/>
            <person name="Harris B."/>
            <person name="Doggett J."/>
            <person name="Ormond D."/>
            <person name="Mungall K."/>
            <person name="Clarke K."/>
            <person name="Feltwell T."/>
            <person name="Hance Z."/>
            <person name="Sanders M."/>
            <person name="Quail M.A."/>
            <person name="Price C."/>
            <person name="Barrell B.G."/>
            <person name="Parkhill J."/>
            <person name="Longbottom D."/>
        </authorList>
    </citation>
    <scope>NUCLEOTIDE SEQUENCE [LARGE SCALE GENOMIC DNA]</scope>
    <source>
        <strain>DSM 27085 / S26/3</strain>
    </source>
</reference>
<gene>
    <name evidence="1" type="primary">dapB</name>
    <name type="ordered locus">CAB680</name>
</gene>
<sequence length="246" mass="27210">MRVGIIGCSGRMGTLLSSLLRSSNRFTLGPGFSRQSPYSLDSVIESNDVLVDFSSSSFSEELLIALLSNPKPLIFATTKPEPSYSVDEKLQRLAAYVPVVVCPNTSLGAYVQKRLVGLLARVFDDRYDIRISEVHHREKKDPVSGTAKELASILCHTKQEAWQQEYSIGSRCHSVKNIELHVSRVGNISGEHEVAFISDKEHISIHHKVFSRAVFAEGALRILDWLIDESPPPGCYGPEVGLKVSM</sequence>
<feature type="chain" id="PRO_1000093950" description="4-hydroxy-tetrahydrodipicolinate reductase">
    <location>
        <begin position="1"/>
        <end position="246"/>
    </location>
</feature>
<feature type="active site" description="Proton donor/acceptor" evidence="1">
    <location>
        <position position="135"/>
    </location>
</feature>
<feature type="active site" description="Proton donor" evidence="1">
    <location>
        <position position="139"/>
    </location>
</feature>
<feature type="binding site" evidence="1">
    <location>
        <begin position="7"/>
        <end position="12"/>
    </location>
    <ligand>
        <name>NAD(+)</name>
        <dbReference type="ChEBI" id="CHEBI:57540"/>
    </ligand>
</feature>
<feature type="binding site" evidence="1">
    <location>
        <position position="34"/>
    </location>
    <ligand>
        <name>NADP(+)</name>
        <dbReference type="ChEBI" id="CHEBI:58349"/>
    </ligand>
</feature>
<feature type="binding site" evidence="1">
    <location>
        <begin position="76"/>
        <end position="78"/>
    </location>
    <ligand>
        <name>NAD(+)</name>
        <dbReference type="ChEBI" id="CHEBI:57540"/>
    </ligand>
</feature>
<feature type="binding site" evidence="1">
    <location>
        <begin position="102"/>
        <end position="105"/>
    </location>
    <ligand>
        <name>NAD(+)</name>
        <dbReference type="ChEBI" id="CHEBI:57540"/>
    </ligand>
</feature>
<feature type="binding site" evidence="1">
    <location>
        <position position="136"/>
    </location>
    <ligand>
        <name>(S)-2,3,4,5-tetrahydrodipicolinate</name>
        <dbReference type="ChEBI" id="CHEBI:16845"/>
    </ligand>
</feature>
<feature type="binding site" evidence="1">
    <location>
        <begin position="145"/>
        <end position="146"/>
    </location>
    <ligand>
        <name>(S)-2,3,4,5-tetrahydrodipicolinate</name>
        <dbReference type="ChEBI" id="CHEBI:16845"/>
    </ligand>
</feature>
<protein>
    <recommendedName>
        <fullName evidence="1">4-hydroxy-tetrahydrodipicolinate reductase</fullName>
        <shortName evidence="1">HTPA reductase</shortName>
        <ecNumber evidence="1">1.17.1.8</ecNumber>
    </recommendedName>
</protein>
<accession>Q5L5G4</accession>
<dbReference type="EC" id="1.17.1.8" evidence="1"/>
<dbReference type="EMBL" id="CR848038">
    <property type="protein sequence ID" value="CAH64127.1"/>
    <property type="molecule type" value="Genomic_DNA"/>
</dbReference>
<dbReference type="RefSeq" id="WP_011097256.1">
    <property type="nucleotide sequence ID" value="NC_004552.2"/>
</dbReference>
<dbReference type="SMR" id="Q5L5G4"/>
<dbReference type="KEGG" id="cab:CAB680"/>
<dbReference type="eggNOG" id="COG0289">
    <property type="taxonomic scope" value="Bacteria"/>
</dbReference>
<dbReference type="HOGENOM" id="CLU_047479_2_2_0"/>
<dbReference type="OrthoDB" id="9790352at2"/>
<dbReference type="UniPathway" id="UPA00034">
    <property type="reaction ID" value="UER00018"/>
</dbReference>
<dbReference type="Proteomes" id="UP000001012">
    <property type="component" value="Chromosome"/>
</dbReference>
<dbReference type="GO" id="GO:0005829">
    <property type="term" value="C:cytosol"/>
    <property type="evidence" value="ECO:0007669"/>
    <property type="project" value="TreeGrafter"/>
</dbReference>
<dbReference type="GO" id="GO:0008839">
    <property type="term" value="F:4-hydroxy-tetrahydrodipicolinate reductase"/>
    <property type="evidence" value="ECO:0007669"/>
    <property type="project" value="UniProtKB-EC"/>
</dbReference>
<dbReference type="GO" id="GO:0051287">
    <property type="term" value="F:NAD binding"/>
    <property type="evidence" value="ECO:0007669"/>
    <property type="project" value="UniProtKB-UniRule"/>
</dbReference>
<dbReference type="GO" id="GO:0050661">
    <property type="term" value="F:NADP binding"/>
    <property type="evidence" value="ECO:0007669"/>
    <property type="project" value="UniProtKB-UniRule"/>
</dbReference>
<dbReference type="GO" id="GO:0016726">
    <property type="term" value="F:oxidoreductase activity, acting on CH or CH2 groups, NAD or NADP as acceptor"/>
    <property type="evidence" value="ECO:0007669"/>
    <property type="project" value="UniProtKB-UniRule"/>
</dbReference>
<dbReference type="GO" id="GO:0019877">
    <property type="term" value="P:diaminopimelate biosynthetic process"/>
    <property type="evidence" value="ECO:0007669"/>
    <property type="project" value="UniProtKB-UniRule"/>
</dbReference>
<dbReference type="GO" id="GO:0009089">
    <property type="term" value="P:lysine biosynthetic process via diaminopimelate"/>
    <property type="evidence" value="ECO:0007669"/>
    <property type="project" value="UniProtKB-UniRule"/>
</dbReference>
<dbReference type="Gene3D" id="3.30.360.10">
    <property type="entry name" value="Dihydrodipicolinate Reductase, domain 2"/>
    <property type="match status" value="1"/>
</dbReference>
<dbReference type="Gene3D" id="3.40.50.720">
    <property type="entry name" value="NAD(P)-binding Rossmann-like Domain"/>
    <property type="match status" value="1"/>
</dbReference>
<dbReference type="HAMAP" id="MF_00102">
    <property type="entry name" value="DapB"/>
    <property type="match status" value="1"/>
</dbReference>
<dbReference type="InterPro" id="IPR022663">
    <property type="entry name" value="DapB_C"/>
</dbReference>
<dbReference type="InterPro" id="IPR000846">
    <property type="entry name" value="DapB_N"/>
</dbReference>
<dbReference type="InterPro" id="IPR022664">
    <property type="entry name" value="DapB_N_CS"/>
</dbReference>
<dbReference type="InterPro" id="IPR023940">
    <property type="entry name" value="DHDPR_bac"/>
</dbReference>
<dbReference type="InterPro" id="IPR036291">
    <property type="entry name" value="NAD(P)-bd_dom_sf"/>
</dbReference>
<dbReference type="PANTHER" id="PTHR20836:SF0">
    <property type="entry name" value="4-HYDROXY-TETRAHYDRODIPICOLINATE REDUCTASE 1, CHLOROPLASTIC-RELATED"/>
    <property type="match status" value="1"/>
</dbReference>
<dbReference type="PANTHER" id="PTHR20836">
    <property type="entry name" value="DIHYDRODIPICOLINATE REDUCTASE"/>
    <property type="match status" value="1"/>
</dbReference>
<dbReference type="Pfam" id="PF05173">
    <property type="entry name" value="DapB_C"/>
    <property type="match status" value="1"/>
</dbReference>
<dbReference type="Pfam" id="PF01113">
    <property type="entry name" value="DapB_N"/>
    <property type="match status" value="1"/>
</dbReference>
<dbReference type="PIRSF" id="PIRSF000161">
    <property type="entry name" value="DHPR"/>
    <property type="match status" value="1"/>
</dbReference>
<dbReference type="SUPFAM" id="SSF55347">
    <property type="entry name" value="Glyceraldehyde-3-phosphate dehydrogenase-like, C-terminal domain"/>
    <property type="match status" value="1"/>
</dbReference>
<dbReference type="SUPFAM" id="SSF51735">
    <property type="entry name" value="NAD(P)-binding Rossmann-fold domains"/>
    <property type="match status" value="1"/>
</dbReference>
<dbReference type="PROSITE" id="PS01298">
    <property type="entry name" value="DAPB"/>
    <property type="match status" value="1"/>
</dbReference>
<evidence type="ECO:0000255" key="1">
    <source>
        <dbReference type="HAMAP-Rule" id="MF_00102"/>
    </source>
</evidence>
<evidence type="ECO:0000305" key="2"/>
<keyword id="KW-0028">Amino-acid biosynthesis</keyword>
<keyword id="KW-0963">Cytoplasm</keyword>
<keyword id="KW-0220">Diaminopimelate biosynthesis</keyword>
<keyword id="KW-0457">Lysine biosynthesis</keyword>
<keyword id="KW-0520">NAD</keyword>
<keyword id="KW-0521">NADP</keyword>
<keyword id="KW-0560">Oxidoreductase</keyword>
<comment type="function">
    <text evidence="1">Catalyzes the conversion of 4-hydroxy-tetrahydrodipicolinate (HTPA) to tetrahydrodipicolinate.</text>
</comment>
<comment type="catalytic activity">
    <reaction evidence="1">
        <text>(S)-2,3,4,5-tetrahydrodipicolinate + NAD(+) + H2O = (2S,4S)-4-hydroxy-2,3,4,5-tetrahydrodipicolinate + NADH + H(+)</text>
        <dbReference type="Rhea" id="RHEA:35323"/>
        <dbReference type="ChEBI" id="CHEBI:15377"/>
        <dbReference type="ChEBI" id="CHEBI:15378"/>
        <dbReference type="ChEBI" id="CHEBI:16845"/>
        <dbReference type="ChEBI" id="CHEBI:57540"/>
        <dbReference type="ChEBI" id="CHEBI:57945"/>
        <dbReference type="ChEBI" id="CHEBI:67139"/>
        <dbReference type="EC" id="1.17.1.8"/>
    </reaction>
</comment>
<comment type="catalytic activity">
    <reaction evidence="1">
        <text>(S)-2,3,4,5-tetrahydrodipicolinate + NADP(+) + H2O = (2S,4S)-4-hydroxy-2,3,4,5-tetrahydrodipicolinate + NADPH + H(+)</text>
        <dbReference type="Rhea" id="RHEA:35331"/>
        <dbReference type="ChEBI" id="CHEBI:15377"/>
        <dbReference type="ChEBI" id="CHEBI:15378"/>
        <dbReference type="ChEBI" id="CHEBI:16845"/>
        <dbReference type="ChEBI" id="CHEBI:57783"/>
        <dbReference type="ChEBI" id="CHEBI:58349"/>
        <dbReference type="ChEBI" id="CHEBI:67139"/>
        <dbReference type="EC" id="1.17.1.8"/>
    </reaction>
</comment>
<comment type="pathway">
    <text evidence="1">Amino-acid biosynthesis; L-lysine biosynthesis via DAP pathway; (S)-tetrahydrodipicolinate from L-aspartate: step 4/4.</text>
</comment>
<comment type="subcellular location">
    <subcellularLocation>
        <location evidence="1">Cytoplasm</location>
    </subcellularLocation>
</comment>
<comment type="similarity">
    <text evidence="1">Belongs to the DapB family.</text>
</comment>
<comment type="caution">
    <text evidence="2">Was originally thought to be a dihydrodipicolinate reductase (DHDPR), catalyzing the conversion of dihydrodipicolinate to tetrahydrodipicolinate. However, it was shown in E.coli that the substrate of the enzymatic reaction is not dihydrodipicolinate (DHDP) but in fact (2S,4S)-4-hydroxy-2,3,4,5-tetrahydrodipicolinic acid (HTPA), the product released by the DapA-catalyzed reaction.</text>
</comment>